<accession>B8J865</accession>
<protein>
    <recommendedName>
        <fullName evidence="1">Large ribosomal subunit protein uL22</fullName>
    </recommendedName>
    <alternativeName>
        <fullName evidence="3">50S ribosomal protein L22</fullName>
    </alternativeName>
</protein>
<dbReference type="EMBL" id="CP001359">
    <property type="protein sequence ID" value="ACL65364.1"/>
    <property type="molecule type" value="Genomic_DNA"/>
</dbReference>
<dbReference type="SMR" id="B8J865"/>
<dbReference type="KEGG" id="acp:A2cp1_2023"/>
<dbReference type="HOGENOM" id="CLU_083987_3_1_7"/>
<dbReference type="Proteomes" id="UP000007089">
    <property type="component" value="Chromosome"/>
</dbReference>
<dbReference type="GO" id="GO:0022625">
    <property type="term" value="C:cytosolic large ribosomal subunit"/>
    <property type="evidence" value="ECO:0007669"/>
    <property type="project" value="TreeGrafter"/>
</dbReference>
<dbReference type="GO" id="GO:0019843">
    <property type="term" value="F:rRNA binding"/>
    <property type="evidence" value="ECO:0007669"/>
    <property type="project" value="UniProtKB-UniRule"/>
</dbReference>
<dbReference type="GO" id="GO:0003735">
    <property type="term" value="F:structural constituent of ribosome"/>
    <property type="evidence" value="ECO:0007669"/>
    <property type="project" value="InterPro"/>
</dbReference>
<dbReference type="GO" id="GO:0006412">
    <property type="term" value="P:translation"/>
    <property type="evidence" value="ECO:0007669"/>
    <property type="project" value="UniProtKB-UniRule"/>
</dbReference>
<dbReference type="CDD" id="cd00336">
    <property type="entry name" value="Ribosomal_L22"/>
    <property type="match status" value="1"/>
</dbReference>
<dbReference type="Gene3D" id="3.90.470.10">
    <property type="entry name" value="Ribosomal protein L22/L17"/>
    <property type="match status" value="1"/>
</dbReference>
<dbReference type="HAMAP" id="MF_01331_B">
    <property type="entry name" value="Ribosomal_uL22_B"/>
    <property type="match status" value="1"/>
</dbReference>
<dbReference type="InterPro" id="IPR001063">
    <property type="entry name" value="Ribosomal_uL22"/>
</dbReference>
<dbReference type="InterPro" id="IPR005727">
    <property type="entry name" value="Ribosomal_uL22_bac/chlpt-type"/>
</dbReference>
<dbReference type="InterPro" id="IPR047867">
    <property type="entry name" value="Ribosomal_uL22_bac/org-type"/>
</dbReference>
<dbReference type="InterPro" id="IPR018260">
    <property type="entry name" value="Ribosomal_uL22_CS"/>
</dbReference>
<dbReference type="InterPro" id="IPR036394">
    <property type="entry name" value="Ribosomal_uL22_sf"/>
</dbReference>
<dbReference type="NCBIfam" id="TIGR01044">
    <property type="entry name" value="rplV_bact"/>
    <property type="match status" value="1"/>
</dbReference>
<dbReference type="PANTHER" id="PTHR13501">
    <property type="entry name" value="CHLOROPLAST 50S RIBOSOMAL PROTEIN L22-RELATED"/>
    <property type="match status" value="1"/>
</dbReference>
<dbReference type="PANTHER" id="PTHR13501:SF8">
    <property type="entry name" value="LARGE RIBOSOMAL SUBUNIT PROTEIN UL22M"/>
    <property type="match status" value="1"/>
</dbReference>
<dbReference type="Pfam" id="PF00237">
    <property type="entry name" value="Ribosomal_L22"/>
    <property type="match status" value="1"/>
</dbReference>
<dbReference type="SUPFAM" id="SSF54843">
    <property type="entry name" value="Ribosomal protein L22"/>
    <property type="match status" value="1"/>
</dbReference>
<dbReference type="PROSITE" id="PS00464">
    <property type="entry name" value="RIBOSOMAL_L22"/>
    <property type="match status" value="1"/>
</dbReference>
<feature type="chain" id="PRO_1000166038" description="Large ribosomal subunit protein uL22">
    <location>
        <begin position="1"/>
        <end position="146"/>
    </location>
</feature>
<feature type="region of interest" description="Disordered" evidence="2">
    <location>
        <begin position="1"/>
        <end position="39"/>
    </location>
</feature>
<gene>
    <name evidence="1" type="primary">rplV</name>
    <name type="ordered locus">A2cp1_2023</name>
</gene>
<sequence>MAETQTTTPKKKAERRAPPPARARKNRPAAPAPGPHASLSYLRVAPRKVRIVADEVRGMKVGDALAMLKYTPQSAAKPLAKLLRSAVANAEQGGGRVDVDALFVKTLTVDQGPKMRRFMARAMGRAFRVEKKTSHVYVELGTAARG</sequence>
<name>RL22_ANAD2</name>
<organism>
    <name type="scientific">Anaeromyxobacter dehalogenans (strain 2CP-1 / ATCC BAA-258)</name>
    <dbReference type="NCBI Taxonomy" id="455488"/>
    <lineage>
        <taxon>Bacteria</taxon>
        <taxon>Pseudomonadati</taxon>
        <taxon>Myxococcota</taxon>
        <taxon>Myxococcia</taxon>
        <taxon>Myxococcales</taxon>
        <taxon>Cystobacterineae</taxon>
        <taxon>Anaeromyxobacteraceae</taxon>
        <taxon>Anaeromyxobacter</taxon>
    </lineage>
</organism>
<comment type="function">
    <text evidence="1">This protein binds specifically to 23S rRNA; its binding is stimulated by other ribosomal proteins, e.g. L4, L17, and L20. It is important during the early stages of 50S assembly. It makes multiple contacts with different domains of the 23S rRNA in the assembled 50S subunit and ribosome (By similarity).</text>
</comment>
<comment type="function">
    <text evidence="1">The globular domain of the protein is located near the polypeptide exit tunnel on the outside of the subunit, while an extended beta-hairpin is found that lines the wall of the exit tunnel in the center of the 70S ribosome.</text>
</comment>
<comment type="subunit">
    <text evidence="1">Part of the 50S ribosomal subunit.</text>
</comment>
<comment type="similarity">
    <text evidence="1">Belongs to the universal ribosomal protein uL22 family.</text>
</comment>
<evidence type="ECO:0000255" key="1">
    <source>
        <dbReference type="HAMAP-Rule" id="MF_01331"/>
    </source>
</evidence>
<evidence type="ECO:0000256" key="2">
    <source>
        <dbReference type="SAM" id="MobiDB-lite"/>
    </source>
</evidence>
<evidence type="ECO:0000305" key="3"/>
<keyword id="KW-0687">Ribonucleoprotein</keyword>
<keyword id="KW-0689">Ribosomal protein</keyword>
<keyword id="KW-0694">RNA-binding</keyword>
<keyword id="KW-0699">rRNA-binding</keyword>
<proteinExistence type="inferred from homology"/>
<reference key="1">
    <citation type="submission" date="2009-01" db="EMBL/GenBank/DDBJ databases">
        <title>Complete sequence of Anaeromyxobacter dehalogenans 2CP-1.</title>
        <authorList>
            <person name="Lucas S."/>
            <person name="Copeland A."/>
            <person name="Lapidus A."/>
            <person name="Glavina del Rio T."/>
            <person name="Dalin E."/>
            <person name="Tice H."/>
            <person name="Bruce D."/>
            <person name="Goodwin L."/>
            <person name="Pitluck S."/>
            <person name="Saunders E."/>
            <person name="Brettin T."/>
            <person name="Detter J.C."/>
            <person name="Han C."/>
            <person name="Larimer F."/>
            <person name="Land M."/>
            <person name="Hauser L."/>
            <person name="Kyrpides N."/>
            <person name="Ovchinnikova G."/>
            <person name="Beliaev A.S."/>
            <person name="Richardson P."/>
        </authorList>
    </citation>
    <scope>NUCLEOTIDE SEQUENCE [LARGE SCALE GENOMIC DNA]</scope>
    <source>
        <strain>2CP-1 / ATCC BAA-258</strain>
    </source>
</reference>